<accession>B0U489</accession>
<dbReference type="EMBL" id="CP000941">
    <property type="protein sequence ID" value="ACA12668.1"/>
    <property type="molecule type" value="Genomic_DNA"/>
</dbReference>
<dbReference type="RefSeq" id="WP_004083572.1">
    <property type="nucleotide sequence ID" value="NC_010513.1"/>
</dbReference>
<dbReference type="SMR" id="B0U489"/>
<dbReference type="KEGG" id="xfm:Xfasm12_1775"/>
<dbReference type="HOGENOM" id="CLU_016077_6_2_6"/>
<dbReference type="GO" id="GO:0016887">
    <property type="term" value="F:ATP hydrolysis activity"/>
    <property type="evidence" value="ECO:0007669"/>
    <property type="project" value="InterPro"/>
</dbReference>
<dbReference type="GO" id="GO:0005525">
    <property type="term" value="F:GTP binding"/>
    <property type="evidence" value="ECO:0007669"/>
    <property type="project" value="UniProtKB-UniRule"/>
</dbReference>
<dbReference type="GO" id="GO:0043022">
    <property type="term" value="F:ribosome binding"/>
    <property type="evidence" value="ECO:0007669"/>
    <property type="project" value="TreeGrafter"/>
</dbReference>
<dbReference type="GO" id="GO:0042254">
    <property type="term" value="P:ribosome biogenesis"/>
    <property type="evidence" value="ECO:0007669"/>
    <property type="project" value="UniProtKB-KW"/>
</dbReference>
<dbReference type="CDD" id="cd01894">
    <property type="entry name" value="EngA1"/>
    <property type="match status" value="1"/>
</dbReference>
<dbReference type="CDD" id="cd01895">
    <property type="entry name" value="EngA2"/>
    <property type="match status" value="1"/>
</dbReference>
<dbReference type="FunFam" id="3.30.300.20:FF:000004">
    <property type="entry name" value="GTPase Der"/>
    <property type="match status" value="1"/>
</dbReference>
<dbReference type="FunFam" id="3.40.50.300:FF:000040">
    <property type="entry name" value="GTPase Der"/>
    <property type="match status" value="1"/>
</dbReference>
<dbReference type="FunFam" id="3.40.50.300:FF:000057">
    <property type="entry name" value="GTPase Der"/>
    <property type="match status" value="1"/>
</dbReference>
<dbReference type="Gene3D" id="3.30.300.20">
    <property type="match status" value="1"/>
</dbReference>
<dbReference type="Gene3D" id="3.40.50.300">
    <property type="entry name" value="P-loop containing nucleotide triphosphate hydrolases"/>
    <property type="match status" value="2"/>
</dbReference>
<dbReference type="HAMAP" id="MF_00195">
    <property type="entry name" value="GTPase_Der"/>
    <property type="match status" value="1"/>
</dbReference>
<dbReference type="InterPro" id="IPR003593">
    <property type="entry name" value="AAA+_ATPase"/>
</dbReference>
<dbReference type="InterPro" id="IPR031166">
    <property type="entry name" value="G_ENGA"/>
</dbReference>
<dbReference type="InterPro" id="IPR006073">
    <property type="entry name" value="GTP-bd"/>
</dbReference>
<dbReference type="InterPro" id="IPR016484">
    <property type="entry name" value="GTPase_Der"/>
</dbReference>
<dbReference type="InterPro" id="IPR032859">
    <property type="entry name" value="KH_dom-like"/>
</dbReference>
<dbReference type="InterPro" id="IPR015946">
    <property type="entry name" value="KH_dom-like_a/b"/>
</dbReference>
<dbReference type="InterPro" id="IPR027417">
    <property type="entry name" value="P-loop_NTPase"/>
</dbReference>
<dbReference type="InterPro" id="IPR005225">
    <property type="entry name" value="Small_GTP-bd"/>
</dbReference>
<dbReference type="NCBIfam" id="TIGR03594">
    <property type="entry name" value="GTPase_EngA"/>
    <property type="match status" value="1"/>
</dbReference>
<dbReference type="NCBIfam" id="TIGR00231">
    <property type="entry name" value="small_GTP"/>
    <property type="match status" value="2"/>
</dbReference>
<dbReference type="PANTHER" id="PTHR43834">
    <property type="entry name" value="GTPASE DER"/>
    <property type="match status" value="1"/>
</dbReference>
<dbReference type="PANTHER" id="PTHR43834:SF6">
    <property type="entry name" value="GTPASE DER"/>
    <property type="match status" value="1"/>
</dbReference>
<dbReference type="Pfam" id="PF14714">
    <property type="entry name" value="KH_dom-like"/>
    <property type="match status" value="1"/>
</dbReference>
<dbReference type="Pfam" id="PF01926">
    <property type="entry name" value="MMR_HSR1"/>
    <property type="match status" value="2"/>
</dbReference>
<dbReference type="PIRSF" id="PIRSF006485">
    <property type="entry name" value="GTP-binding_EngA"/>
    <property type="match status" value="1"/>
</dbReference>
<dbReference type="PRINTS" id="PR00326">
    <property type="entry name" value="GTP1OBG"/>
</dbReference>
<dbReference type="SMART" id="SM00382">
    <property type="entry name" value="AAA"/>
    <property type="match status" value="2"/>
</dbReference>
<dbReference type="SUPFAM" id="SSF52540">
    <property type="entry name" value="P-loop containing nucleoside triphosphate hydrolases"/>
    <property type="match status" value="2"/>
</dbReference>
<dbReference type="PROSITE" id="PS51712">
    <property type="entry name" value="G_ENGA"/>
    <property type="match status" value="2"/>
</dbReference>
<proteinExistence type="inferred from homology"/>
<protein>
    <recommendedName>
        <fullName evidence="1">GTPase Der</fullName>
    </recommendedName>
    <alternativeName>
        <fullName evidence="1">GTP-binding protein EngA</fullName>
    </alternativeName>
</protein>
<gene>
    <name evidence="1" type="primary">der</name>
    <name type="synonym">engA</name>
    <name type="ordered locus">Xfasm12_1775</name>
</gene>
<organism>
    <name type="scientific">Xylella fastidiosa (strain M12)</name>
    <dbReference type="NCBI Taxonomy" id="405440"/>
    <lineage>
        <taxon>Bacteria</taxon>
        <taxon>Pseudomonadati</taxon>
        <taxon>Pseudomonadota</taxon>
        <taxon>Gammaproteobacteria</taxon>
        <taxon>Lysobacterales</taxon>
        <taxon>Lysobacteraceae</taxon>
        <taxon>Xylella</taxon>
    </lineage>
</organism>
<comment type="function">
    <text evidence="1">GTPase that plays an essential role in the late steps of ribosome biogenesis.</text>
</comment>
<comment type="subunit">
    <text evidence="1">Associates with the 50S ribosomal subunit.</text>
</comment>
<comment type="similarity">
    <text evidence="1">Belongs to the TRAFAC class TrmE-Era-EngA-EngB-Septin-like GTPase superfamily. EngA (Der) GTPase family.</text>
</comment>
<evidence type="ECO:0000255" key="1">
    <source>
        <dbReference type="HAMAP-Rule" id="MF_00195"/>
    </source>
</evidence>
<keyword id="KW-0342">GTP-binding</keyword>
<keyword id="KW-0547">Nucleotide-binding</keyword>
<keyword id="KW-0677">Repeat</keyword>
<keyword id="KW-0690">Ribosome biogenesis</keyword>
<name>DER_XYLFM</name>
<feature type="chain" id="PRO_1000099182" description="GTPase Der">
    <location>
        <begin position="1"/>
        <end position="465"/>
    </location>
</feature>
<feature type="domain" description="EngA-type G 1">
    <location>
        <begin position="3"/>
        <end position="167"/>
    </location>
</feature>
<feature type="domain" description="EngA-type G 2">
    <location>
        <begin position="179"/>
        <end position="352"/>
    </location>
</feature>
<feature type="domain" description="KH-like" evidence="1">
    <location>
        <begin position="353"/>
        <end position="437"/>
    </location>
</feature>
<feature type="binding site" evidence="1">
    <location>
        <begin position="9"/>
        <end position="16"/>
    </location>
    <ligand>
        <name>GTP</name>
        <dbReference type="ChEBI" id="CHEBI:37565"/>
        <label>1</label>
    </ligand>
</feature>
<feature type="binding site" evidence="1">
    <location>
        <begin position="57"/>
        <end position="61"/>
    </location>
    <ligand>
        <name>GTP</name>
        <dbReference type="ChEBI" id="CHEBI:37565"/>
        <label>1</label>
    </ligand>
</feature>
<feature type="binding site" evidence="1">
    <location>
        <begin position="119"/>
        <end position="122"/>
    </location>
    <ligand>
        <name>GTP</name>
        <dbReference type="ChEBI" id="CHEBI:37565"/>
        <label>1</label>
    </ligand>
</feature>
<feature type="binding site" evidence="1">
    <location>
        <begin position="185"/>
        <end position="192"/>
    </location>
    <ligand>
        <name>GTP</name>
        <dbReference type="ChEBI" id="CHEBI:37565"/>
        <label>2</label>
    </ligand>
</feature>
<feature type="binding site" evidence="1">
    <location>
        <begin position="232"/>
        <end position="236"/>
    </location>
    <ligand>
        <name>GTP</name>
        <dbReference type="ChEBI" id="CHEBI:37565"/>
        <label>2</label>
    </ligand>
</feature>
<feature type="binding site" evidence="1">
    <location>
        <begin position="297"/>
        <end position="300"/>
    </location>
    <ligand>
        <name>GTP</name>
        <dbReference type="ChEBI" id="CHEBI:37565"/>
        <label>2</label>
    </ligand>
</feature>
<sequence>MLPLVALVGRPNVGKSTLFNALTLTRDALVHDQPGVTRDRHYGVCRIDGQPLFAVVDTGGMVGKEDGLAGATARQARLAAAEADVVLFVVNVREGASALDDDILAWLRKLSQPTLLVINKIDGVSDTTVHSEFAHYGFSDVVPVSAAHRQGLDDLIEQVLAWLPERSIGEALNEDSERIHIAFVGRPNVGKSTLVNRLLGEERMIVSDVPGTTRDSITVDLERDEFRYRLVDTAGLRRKSKVEEAVEKFSAFKTLQAIEQCQVAVLLLDAGEGVTDQDATVLAAILDAGKALVVAMNKWDGLATYQREQAEDLLSRKLGFVNWAEVVRLSAKHGSGLRELFRAIHRAHVSALRQFSTSEVNKALEIAYQTAPPPSIRGYVSKLRYVHPAGSNPPTFIVHGTRLKVLPDTYKRYLENFFRKRFKLVGTPVRFLFREGDNPYEGKKNVLSERQIQRRRRLMRHVKRK</sequence>
<reference key="1">
    <citation type="journal article" date="2010" name="J. Bacteriol.">
        <title>Whole genome sequences of two Xylella fastidiosa strains (M12 and M23) causing almond leaf scorch disease in California.</title>
        <authorList>
            <person name="Chen J."/>
            <person name="Xie G."/>
            <person name="Han S."/>
            <person name="Chertkov O."/>
            <person name="Sims D."/>
            <person name="Civerolo E.L."/>
        </authorList>
    </citation>
    <scope>NUCLEOTIDE SEQUENCE [LARGE SCALE GENOMIC DNA]</scope>
    <source>
        <strain>M12</strain>
    </source>
</reference>